<comment type="function">
    <text evidence="1">Regulates NF-kappa-B transcription factor activity. Promotes growth of cardiomyocytes, but not cardiomyocyte proliferation. Promotes cardiac muscle hypertrophy. Plays a role in the regulation of the growth of actin filaments. Inhibits the activity of the F-actin-capping protein complex (By similarity).</text>
</comment>
<comment type="subcellular location">
    <subcellularLocation>
        <location evidence="1">Cytoplasm</location>
    </subcellularLocation>
    <subcellularLocation>
        <location evidence="1">Nucleus</location>
    </subcellularLocation>
    <subcellularLocation>
        <location evidence="1">Cytoplasm</location>
        <location evidence="1">Perinuclear region</location>
    </subcellularLocation>
</comment>
<comment type="similarity">
    <text evidence="2">Belongs to the myotrophin family.</text>
</comment>
<dbReference type="EMBL" id="BC056092">
    <property type="protein sequence ID" value="AAH56092.1"/>
    <property type="molecule type" value="mRNA"/>
</dbReference>
<dbReference type="RefSeq" id="NP_001079881.1">
    <property type="nucleotide sequence ID" value="NM_001086412.1"/>
</dbReference>
<dbReference type="SMR" id="Q7T0Q1"/>
<dbReference type="DNASU" id="379571"/>
<dbReference type="GeneID" id="379571"/>
<dbReference type="KEGG" id="xla:379571"/>
<dbReference type="AGR" id="Xenbase:XB-GENE-1014019"/>
<dbReference type="CTD" id="379571"/>
<dbReference type="Xenbase" id="XB-GENE-1014019">
    <property type="gene designation" value="mtpn.S"/>
</dbReference>
<dbReference type="OrthoDB" id="194358at2759"/>
<dbReference type="CD-CODE" id="78E86D56">
    <property type="entry name" value="Mitochondrial cloud"/>
</dbReference>
<dbReference type="Proteomes" id="UP000186698">
    <property type="component" value="Chromosome 3S"/>
</dbReference>
<dbReference type="Bgee" id="379571">
    <property type="expression patterns" value="Expressed in intestine and 19 other cell types or tissues"/>
</dbReference>
<dbReference type="GO" id="GO:0070531">
    <property type="term" value="C:BRCA1-A complex"/>
    <property type="evidence" value="ECO:0007669"/>
    <property type="project" value="TreeGrafter"/>
</dbReference>
<dbReference type="GO" id="GO:0031436">
    <property type="term" value="C:BRCA1-BARD1 complex"/>
    <property type="evidence" value="ECO:0007669"/>
    <property type="project" value="TreeGrafter"/>
</dbReference>
<dbReference type="GO" id="GO:0005737">
    <property type="term" value="C:cytoplasm"/>
    <property type="evidence" value="ECO:0000318"/>
    <property type="project" value="GO_Central"/>
</dbReference>
<dbReference type="GO" id="GO:0005634">
    <property type="term" value="C:nucleus"/>
    <property type="evidence" value="ECO:0000318"/>
    <property type="project" value="GO_Central"/>
</dbReference>
<dbReference type="GO" id="GO:0048471">
    <property type="term" value="C:perinuclear region of cytoplasm"/>
    <property type="evidence" value="ECO:0007669"/>
    <property type="project" value="UniProtKB-SubCell"/>
</dbReference>
<dbReference type="GO" id="GO:0004842">
    <property type="term" value="F:ubiquitin-protein transferase activity"/>
    <property type="evidence" value="ECO:0007669"/>
    <property type="project" value="TreeGrafter"/>
</dbReference>
<dbReference type="GO" id="GO:0085020">
    <property type="term" value="P:protein K6-linked ubiquitination"/>
    <property type="evidence" value="ECO:0007669"/>
    <property type="project" value="TreeGrafter"/>
</dbReference>
<dbReference type="GO" id="GO:2000812">
    <property type="term" value="P:regulation of barbed-end actin filament capping"/>
    <property type="evidence" value="ECO:0000318"/>
    <property type="project" value="GO_Central"/>
</dbReference>
<dbReference type="FunFam" id="1.25.40.20:FF:000118">
    <property type="entry name" value="Myotrophin"/>
    <property type="match status" value="1"/>
</dbReference>
<dbReference type="Gene3D" id="1.25.40.20">
    <property type="entry name" value="Ankyrin repeat-containing domain"/>
    <property type="match status" value="1"/>
</dbReference>
<dbReference type="InterPro" id="IPR002110">
    <property type="entry name" value="Ankyrin_rpt"/>
</dbReference>
<dbReference type="InterPro" id="IPR036770">
    <property type="entry name" value="Ankyrin_rpt-contain_sf"/>
</dbReference>
<dbReference type="PANTHER" id="PTHR24171">
    <property type="entry name" value="ANKYRIN REPEAT DOMAIN-CONTAINING PROTEIN 39-RELATED"/>
    <property type="match status" value="1"/>
</dbReference>
<dbReference type="PANTHER" id="PTHR24171:SF8">
    <property type="entry name" value="BRCA1-ASSOCIATED RING DOMAIN PROTEIN 1"/>
    <property type="match status" value="1"/>
</dbReference>
<dbReference type="Pfam" id="PF12796">
    <property type="entry name" value="Ank_2"/>
    <property type="match status" value="1"/>
</dbReference>
<dbReference type="PRINTS" id="PR01415">
    <property type="entry name" value="ANKYRIN"/>
</dbReference>
<dbReference type="SMART" id="SM00248">
    <property type="entry name" value="ANK"/>
    <property type="match status" value="3"/>
</dbReference>
<dbReference type="SUPFAM" id="SSF48403">
    <property type="entry name" value="Ankyrin repeat"/>
    <property type="match status" value="1"/>
</dbReference>
<dbReference type="PROSITE" id="PS50297">
    <property type="entry name" value="ANK_REP_REGION"/>
    <property type="match status" value="1"/>
</dbReference>
<dbReference type="PROSITE" id="PS50088">
    <property type="entry name" value="ANK_REPEAT"/>
    <property type="match status" value="2"/>
</dbReference>
<proteinExistence type="inferred from homology"/>
<gene>
    <name type="primary">mtpn</name>
</gene>
<sequence>MGDKEFMWALKNGDLDAVKEFVAGGVDVNRTLEGGRKPLHYAADCGQDEIVEFLLAKGANINAADKHGITPLLSACYEGHRKCVELFVSKGADKNVKGPDGLNAFESTDNQAIKDLLH</sequence>
<name>MTPN_XENLA</name>
<feature type="chain" id="PRO_0000330662" description="Myotrophin">
    <location>
        <begin position="1"/>
        <end position="118"/>
    </location>
</feature>
<feature type="repeat" description="ANK 1">
    <location>
        <begin position="1"/>
        <end position="30"/>
    </location>
</feature>
<feature type="repeat" description="ANK 2">
    <location>
        <begin position="34"/>
        <end position="65"/>
    </location>
</feature>
<feature type="repeat" description="ANK 3">
    <location>
        <begin position="67"/>
        <end position="98"/>
    </location>
</feature>
<accession>Q7T0Q1</accession>
<reference key="1">
    <citation type="submission" date="2003-08" db="EMBL/GenBank/DDBJ databases">
        <authorList>
            <consortium name="NIH - Xenopus Gene Collection (XGC) project"/>
        </authorList>
    </citation>
    <scope>NUCLEOTIDE SEQUENCE [LARGE SCALE MRNA]</scope>
    <source>
        <tissue>Ovary</tissue>
    </source>
</reference>
<organism>
    <name type="scientific">Xenopus laevis</name>
    <name type="common">African clawed frog</name>
    <dbReference type="NCBI Taxonomy" id="8355"/>
    <lineage>
        <taxon>Eukaryota</taxon>
        <taxon>Metazoa</taxon>
        <taxon>Chordata</taxon>
        <taxon>Craniata</taxon>
        <taxon>Vertebrata</taxon>
        <taxon>Euteleostomi</taxon>
        <taxon>Amphibia</taxon>
        <taxon>Batrachia</taxon>
        <taxon>Anura</taxon>
        <taxon>Pipoidea</taxon>
        <taxon>Pipidae</taxon>
        <taxon>Xenopodinae</taxon>
        <taxon>Xenopus</taxon>
        <taxon>Xenopus</taxon>
    </lineage>
</organism>
<protein>
    <recommendedName>
        <fullName>Myotrophin</fullName>
    </recommendedName>
</protein>
<keyword id="KW-0040">ANK repeat</keyword>
<keyword id="KW-0963">Cytoplasm</keyword>
<keyword id="KW-0539">Nucleus</keyword>
<keyword id="KW-1185">Reference proteome</keyword>
<keyword id="KW-0677">Repeat</keyword>
<evidence type="ECO:0000250" key="1"/>
<evidence type="ECO:0000305" key="2"/>